<keyword id="KW-0903">Direct protein sequencing</keyword>
<keyword id="KW-1015">Disulfide bond</keyword>
<keyword id="KW-0872">Ion channel impairing toxin</keyword>
<keyword id="KW-0528">Neurotoxin</keyword>
<keyword id="KW-0632">Potassium channel impairing toxin</keyword>
<keyword id="KW-0964">Secreted</keyword>
<keyword id="KW-0800">Toxin</keyword>
<keyword id="KW-1220">Voltage-gated potassium channel impairing toxin</keyword>
<comment type="function">
    <text evidence="3">Blocks Shaker potassium channels.</text>
</comment>
<comment type="subcellular location">
    <subcellularLocation>
        <location evidence="3">Secreted</location>
    </subcellularLocation>
</comment>
<comment type="tissue specificity">
    <text evidence="6">Expressed by the venom gland.</text>
</comment>
<comment type="domain">
    <text evidence="1">Has the structural arrangement of an alpha-helix connected to a beta-sheet by disulfide bonds (CSalpha/beta).</text>
</comment>
<comment type="similarity">
    <text evidence="2">Belongs to the short scorpion toxin superfamily. Potassium channel inhibitor family. Alpha-KTx 09 subfamily.</text>
</comment>
<feature type="peptide" id="PRO_0000401116" description="Potassium channel toxin alpha-KTx 9.10" evidence="3">
    <location>
        <begin position="1"/>
        <end position="28"/>
    </location>
</feature>
<feature type="disulfide bond" evidence="1">
    <location>
        <begin position="3"/>
        <end position="19"/>
    </location>
</feature>
<feature type="disulfide bond" evidence="1">
    <location>
        <begin position="6"/>
        <end position="24"/>
    </location>
</feature>
<feature type="disulfide bond" evidence="1">
    <location>
        <begin position="10"/>
        <end position="26"/>
    </location>
</feature>
<accession>P86398</accession>
<sequence>VGCEECPMHCKGKNAVPTCDNGVCNCNA</sequence>
<evidence type="ECO:0000250" key="1">
    <source>
        <dbReference type="UniProtKB" id="Q9NJP7"/>
    </source>
</evidence>
<evidence type="ECO:0000255" key="2"/>
<evidence type="ECO:0000269" key="3">
    <source ref="1"/>
</evidence>
<evidence type="ECO:0000303" key="4">
    <source ref="1"/>
</evidence>
<evidence type="ECO:0000305" key="5"/>
<evidence type="ECO:0000305" key="6">
    <source ref="1"/>
</evidence>
<name>KAX9A_MESEU</name>
<organism>
    <name type="scientific">Mesobuthus eupeus</name>
    <name type="common">Lesser Asian scorpion</name>
    <name type="synonym">Buthus eupeus</name>
    <dbReference type="NCBI Taxonomy" id="34648"/>
    <lineage>
        <taxon>Eukaryota</taxon>
        <taxon>Metazoa</taxon>
        <taxon>Ecdysozoa</taxon>
        <taxon>Arthropoda</taxon>
        <taxon>Chelicerata</taxon>
        <taxon>Arachnida</taxon>
        <taxon>Scorpiones</taxon>
        <taxon>Buthida</taxon>
        <taxon>Buthoidea</taxon>
        <taxon>Buthidae</taxon>
        <taxon>Mesobuthus</taxon>
    </lineage>
</organism>
<proteinExistence type="evidence at protein level"/>
<reference key="1">
    <citation type="submission" date="2009-11" db="UniProtKB">
        <title>Characterization of a new alpha-potassium channel toxin from the Mesobuthus eupeus venom.</title>
        <authorList>
            <person name="Zhu S.Y."/>
            <person name="Gao B."/>
        </authorList>
    </citation>
    <scope>PROTEIN SEQUENCE</scope>
    <scope>FUNCTION</scope>
    <scope>SUBCELLULAR LOCATION</scope>
    <source>
        <tissue>Venom</tissue>
    </source>
</reference>
<protein>
    <recommendedName>
        <fullName evidence="5">Potassium channel toxin alpha-KTx 9.10</fullName>
    </recommendedName>
    <alternativeName>
        <fullName evidence="4">Toxin MeuKTx-5</fullName>
    </alternativeName>
</protein>
<dbReference type="SMR" id="P86398"/>
<dbReference type="GO" id="GO:0005576">
    <property type="term" value="C:extracellular region"/>
    <property type="evidence" value="ECO:0007669"/>
    <property type="project" value="UniProtKB-SubCell"/>
</dbReference>
<dbReference type="GO" id="GO:0008200">
    <property type="term" value="F:ion channel inhibitor activity"/>
    <property type="evidence" value="ECO:0007669"/>
    <property type="project" value="InterPro"/>
</dbReference>
<dbReference type="GO" id="GO:0015459">
    <property type="term" value="F:potassium channel regulator activity"/>
    <property type="evidence" value="ECO:0007669"/>
    <property type="project" value="UniProtKB-KW"/>
</dbReference>
<dbReference type="GO" id="GO:0090729">
    <property type="term" value="F:toxin activity"/>
    <property type="evidence" value="ECO:0007669"/>
    <property type="project" value="UniProtKB-KW"/>
</dbReference>
<dbReference type="InterPro" id="IPR036574">
    <property type="entry name" value="Scorpion_toxin-like_sf"/>
</dbReference>
<dbReference type="InterPro" id="IPR008911">
    <property type="entry name" value="Toxin_alpha-KTx_8/9"/>
</dbReference>
<dbReference type="Pfam" id="PF05453">
    <property type="entry name" value="Toxin_6"/>
    <property type="match status" value="1"/>
</dbReference>
<dbReference type="SUPFAM" id="SSF57095">
    <property type="entry name" value="Scorpion toxin-like"/>
    <property type="match status" value="1"/>
</dbReference>